<sequence>MTTFMTKDFLLKNDIARTLYHKYAAPMPIYDFHCHLSPQEIADDRRFDNLGQIWLEGDHYKWRALRSAGVDESLITGKETSDYEKYMAWANTVPKTLGNPLYHWTHLELRRPFGITDTLFGPDTAESIWTQCNEKLATPAFSARGIMQQMNVRMVGTTDDPIDSLAYHRQIAADDSFGIEVAPSWRPDKAFKIELDGFVDYLGKLEAAADVNITRFDDLRRALTRRLDHFAACGCRAADHGIETLRFAPVPDDAQLDAILGKRLAGETLSELEIAQFTTAVLVWLGRQYAARGWVMQLHIGAIRNNNTRMFRLLGPDTGFDSIGDNNISWALSRLLDSMDVTNELPKTILYCLNPRDNEVLATMTGNFQGPGIAGKVQFGSGWWFNDQKDGMLRQLEQLSQMGLLSQFVGMLTDSRSFLSYTRHEYFRRILCNLLGQWAQDGEIPDDEAMLSRMVQDICFNNAQHYFAIK</sequence>
<evidence type="ECO:0000255" key="1">
    <source>
        <dbReference type="HAMAP-Rule" id="MF_00675"/>
    </source>
</evidence>
<organism>
    <name type="scientific">Salmonella arizonae (strain ATCC BAA-731 / CDC346-86 / RSK2980)</name>
    <dbReference type="NCBI Taxonomy" id="41514"/>
    <lineage>
        <taxon>Bacteria</taxon>
        <taxon>Pseudomonadati</taxon>
        <taxon>Pseudomonadota</taxon>
        <taxon>Gammaproteobacteria</taxon>
        <taxon>Enterobacterales</taxon>
        <taxon>Enterobacteriaceae</taxon>
        <taxon>Salmonella</taxon>
    </lineage>
</organism>
<accession>A9MQL9</accession>
<protein>
    <recommendedName>
        <fullName evidence="1">Uronate isomerase</fullName>
        <ecNumber evidence="1">5.3.1.12</ecNumber>
    </recommendedName>
    <alternativeName>
        <fullName evidence="1">Glucuronate isomerase</fullName>
    </alternativeName>
    <alternativeName>
        <fullName evidence="1">Uronic isomerase</fullName>
    </alternativeName>
</protein>
<gene>
    <name evidence="1" type="primary">uxaC</name>
    <name type="ordered locus">SARI_04489</name>
</gene>
<comment type="catalytic activity">
    <reaction evidence="1">
        <text>D-glucuronate = D-fructuronate</text>
        <dbReference type="Rhea" id="RHEA:13049"/>
        <dbReference type="ChEBI" id="CHEBI:58720"/>
        <dbReference type="ChEBI" id="CHEBI:59863"/>
        <dbReference type="EC" id="5.3.1.12"/>
    </reaction>
</comment>
<comment type="catalytic activity">
    <reaction evidence="1">
        <text>aldehydo-D-galacturonate = keto-D-tagaturonate</text>
        <dbReference type="Rhea" id="RHEA:27702"/>
        <dbReference type="ChEBI" id="CHEBI:12952"/>
        <dbReference type="ChEBI" id="CHEBI:17886"/>
        <dbReference type="EC" id="5.3.1.12"/>
    </reaction>
</comment>
<comment type="pathway">
    <text evidence="1">Carbohydrate metabolism; pentose and glucuronate interconversion.</text>
</comment>
<comment type="similarity">
    <text evidence="1">Belongs to the metallo-dependent hydrolases superfamily. Uronate isomerase family.</text>
</comment>
<proteinExistence type="inferred from homology"/>
<dbReference type="EC" id="5.3.1.12" evidence="1"/>
<dbReference type="EMBL" id="CP000880">
    <property type="protein sequence ID" value="ABX24263.1"/>
    <property type="molecule type" value="Genomic_DNA"/>
</dbReference>
<dbReference type="SMR" id="A9MQL9"/>
<dbReference type="STRING" id="41514.SARI_04489"/>
<dbReference type="KEGG" id="ses:SARI_04489"/>
<dbReference type="HOGENOM" id="CLU_044465_1_0_6"/>
<dbReference type="UniPathway" id="UPA00246"/>
<dbReference type="Proteomes" id="UP000002084">
    <property type="component" value="Chromosome"/>
</dbReference>
<dbReference type="GO" id="GO:0008880">
    <property type="term" value="F:glucuronate isomerase activity"/>
    <property type="evidence" value="ECO:0007669"/>
    <property type="project" value="UniProtKB-UniRule"/>
</dbReference>
<dbReference type="GO" id="GO:0019698">
    <property type="term" value="P:D-galacturonate catabolic process"/>
    <property type="evidence" value="ECO:0007669"/>
    <property type="project" value="TreeGrafter"/>
</dbReference>
<dbReference type="GO" id="GO:0042840">
    <property type="term" value="P:D-glucuronate catabolic process"/>
    <property type="evidence" value="ECO:0007669"/>
    <property type="project" value="TreeGrafter"/>
</dbReference>
<dbReference type="Gene3D" id="3.20.20.140">
    <property type="entry name" value="Metal-dependent hydrolases"/>
    <property type="match status" value="1"/>
</dbReference>
<dbReference type="Gene3D" id="1.10.2020.10">
    <property type="entry name" value="uronate isomerase, domain 2, chain A"/>
    <property type="match status" value="1"/>
</dbReference>
<dbReference type="HAMAP" id="MF_00675">
    <property type="entry name" value="UxaC"/>
    <property type="match status" value="1"/>
</dbReference>
<dbReference type="InterPro" id="IPR032466">
    <property type="entry name" value="Metal_Hydrolase"/>
</dbReference>
<dbReference type="InterPro" id="IPR003766">
    <property type="entry name" value="Uronate_isomerase"/>
</dbReference>
<dbReference type="NCBIfam" id="NF002794">
    <property type="entry name" value="PRK02925.1"/>
    <property type="match status" value="1"/>
</dbReference>
<dbReference type="PANTHER" id="PTHR30068">
    <property type="entry name" value="URONATE ISOMERASE"/>
    <property type="match status" value="1"/>
</dbReference>
<dbReference type="PANTHER" id="PTHR30068:SF4">
    <property type="entry name" value="URONATE ISOMERASE"/>
    <property type="match status" value="1"/>
</dbReference>
<dbReference type="Pfam" id="PF02614">
    <property type="entry name" value="UxaC"/>
    <property type="match status" value="1"/>
</dbReference>
<dbReference type="SUPFAM" id="SSF51556">
    <property type="entry name" value="Metallo-dependent hydrolases"/>
    <property type="match status" value="1"/>
</dbReference>
<feature type="chain" id="PRO_1000082965" description="Uronate isomerase">
    <location>
        <begin position="1"/>
        <end position="470"/>
    </location>
</feature>
<name>UXAC_SALAR</name>
<keyword id="KW-0413">Isomerase</keyword>
<keyword id="KW-1185">Reference proteome</keyword>
<reference key="1">
    <citation type="submission" date="2007-11" db="EMBL/GenBank/DDBJ databases">
        <authorList>
            <consortium name="The Salmonella enterica serovar Arizonae Genome Sequencing Project"/>
            <person name="McClelland M."/>
            <person name="Sanderson E.K."/>
            <person name="Porwollik S."/>
            <person name="Spieth J."/>
            <person name="Clifton W.S."/>
            <person name="Fulton R."/>
            <person name="Chunyan W."/>
            <person name="Wollam A."/>
            <person name="Shah N."/>
            <person name="Pepin K."/>
            <person name="Bhonagiri V."/>
            <person name="Nash W."/>
            <person name="Johnson M."/>
            <person name="Thiruvilangam P."/>
            <person name="Wilson R."/>
        </authorList>
    </citation>
    <scope>NUCLEOTIDE SEQUENCE [LARGE SCALE GENOMIC DNA]</scope>
    <source>
        <strain>ATCC BAA-731 / CDC346-86 / RSK2980</strain>
    </source>
</reference>